<reference key="1">
    <citation type="journal article" date="2001" name="Proc. Natl. Acad. Sci. U.S.A.">
        <title>Analysis of the chromosome sequence of the legume symbiont Sinorhizobium meliloti strain 1021.</title>
        <authorList>
            <person name="Capela D."/>
            <person name="Barloy-Hubler F."/>
            <person name="Gouzy J."/>
            <person name="Bothe G."/>
            <person name="Ampe F."/>
            <person name="Batut J."/>
            <person name="Boistard P."/>
            <person name="Becker A."/>
            <person name="Boutry M."/>
            <person name="Cadieu E."/>
            <person name="Dreano S."/>
            <person name="Gloux S."/>
            <person name="Godrie T."/>
            <person name="Goffeau A."/>
            <person name="Kahn D."/>
            <person name="Kiss E."/>
            <person name="Lelaure V."/>
            <person name="Masuy D."/>
            <person name="Pohl T."/>
            <person name="Portetelle D."/>
            <person name="Puehler A."/>
            <person name="Purnelle B."/>
            <person name="Ramsperger U."/>
            <person name="Renard C."/>
            <person name="Thebault P."/>
            <person name="Vandenbol M."/>
            <person name="Weidner S."/>
            <person name="Galibert F."/>
        </authorList>
    </citation>
    <scope>NUCLEOTIDE SEQUENCE [LARGE SCALE GENOMIC DNA]</scope>
    <source>
        <strain>1021</strain>
    </source>
</reference>
<reference key="2">
    <citation type="journal article" date="2001" name="Science">
        <title>The composite genome of the legume symbiont Sinorhizobium meliloti.</title>
        <authorList>
            <person name="Galibert F."/>
            <person name="Finan T.M."/>
            <person name="Long S.R."/>
            <person name="Puehler A."/>
            <person name="Abola P."/>
            <person name="Ampe F."/>
            <person name="Barloy-Hubler F."/>
            <person name="Barnett M.J."/>
            <person name="Becker A."/>
            <person name="Boistard P."/>
            <person name="Bothe G."/>
            <person name="Boutry M."/>
            <person name="Bowser L."/>
            <person name="Buhrmester J."/>
            <person name="Cadieu E."/>
            <person name="Capela D."/>
            <person name="Chain P."/>
            <person name="Cowie A."/>
            <person name="Davis R.W."/>
            <person name="Dreano S."/>
            <person name="Federspiel N.A."/>
            <person name="Fisher R.F."/>
            <person name="Gloux S."/>
            <person name="Godrie T."/>
            <person name="Goffeau A."/>
            <person name="Golding B."/>
            <person name="Gouzy J."/>
            <person name="Gurjal M."/>
            <person name="Hernandez-Lucas I."/>
            <person name="Hong A."/>
            <person name="Huizar L."/>
            <person name="Hyman R.W."/>
            <person name="Jones T."/>
            <person name="Kahn D."/>
            <person name="Kahn M.L."/>
            <person name="Kalman S."/>
            <person name="Keating D.H."/>
            <person name="Kiss E."/>
            <person name="Komp C."/>
            <person name="Lelaure V."/>
            <person name="Masuy D."/>
            <person name="Palm C."/>
            <person name="Peck M.C."/>
            <person name="Pohl T.M."/>
            <person name="Portetelle D."/>
            <person name="Purnelle B."/>
            <person name="Ramsperger U."/>
            <person name="Surzycki R."/>
            <person name="Thebault P."/>
            <person name="Vandenbol M."/>
            <person name="Vorhoelter F.J."/>
            <person name="Weidner S."/>
            <person name="Wells D.H."/>
            <person name="Wong K."/>
            <person name="Yeh K.-C."/>
            <person name="Batut J."/>
        </authorList>
    </citation>
    <scope>NUCLEOTIDE SEQUENCE [LARGE SCALE GENOMIC DNA]</scope>
    <source>
        <strain>1021</strain>
    </source>
</reference>
<name>RUVC_RHIME</name>
<feature type="chain" id="PRO_0000183126" description="Crossover junction endodeoxyribonuclease RuvC">
    <location>
        <begin position="1"/>
        <end position="170"/>
    </location>
</feature>
<feature type="active site" evidence="1">
    <location>
        <position position="11"/>
    </location>
</feature>
<feature type="active site" evidence="1">
    <location>
        <position position="71"/>
    </location>
</feature>
<feature type="active site" evidence="1">
    <location>
        <position position="143"/>
    </location>
</feature>
<feature type="binding site" evidence="1">
    <location>
        <position position="11"/>
    </location>
    <ligand>
        <name>Mg(2+)</name>
        <dbReference type="ChEBI" id="CHEBI:18420"/>
        <label>1</label>
    </ligand>
</feature>
<feature type="binding site" evidence="1">
    <location>
        <position position="71"/>
    </location>
    <ligand>
        <name>Mg(2+)</name>
        <dbReference type="ChEBI" id="CHEBI:18420"/>
        <label>2</label>
    </ligand>
</feature>
<feature type="binding site" evidence="1">
    <location>
        <position position="143"/>
    </location>
    <ligand>
        <name>Mg(2+)</name>
        <dbReference type="ChEBI" id="CHEBI:18420"/>
        <label>1</label>
    </ligand>
</feature>
<dbReference type="EC" id="3.1.21.10" evidence="1"/>
<dbReference type="EMBL" id="AL591688">
    <property type="protein sequence ID" value="CAC47330.1"/>
    <property type="molecule type" value="Genomic_DNA"/>
</dbReference>
<dbReference type="RefSeq" id="NP_386857.1">
    <property type="nucleotide sequence ID" value="NC_003047.1"/>
</dbReference>
<dbReference type="RefSeq" id="WP_003535966.1">
    <property type="nucleotide sequence ID" value="NC_003047.1"/>
</dbReference>
<dbReference type="SMR" id="Q92M90"/>
<dbReference type="EnsemblBacteria" id="CAC47330">
    <property type="protein sequence ID" value="CAC47330"/>
    <property type="gene ID" value="SMc03967"/>
</dbReference>
<dbReference type="KEGG" id="sme:SMc03967"/>
<dbReference type="PATRIC" id="fig|266834.11.peg.4260"/>
<dbReference type="eggNOG" id="COG0817">
    <property type="taxonomic scope" value="Bacteria"/>
</dbReference>
<dbReference type="HOGENOM" id="CLU_091257_1_0_5"/>
<dbReference type="OrthoDB" id="9805499at2"/>
<dbReference type="Proteomes" id="UP000001976">
    <property type="component" value="Chromosome"/>
</dbReference>
<dbReference type="GO" id="GO:0005737">
    <property type="term" value="C:cytoplasm"/>
    <property type="evidence" value="ECO:0007669"/>
    <property type="project" value="UniProtKB-SubCell"/>
</dbReference>
<dbReference type="GO" id="GO:0048476">
    <property type="term" value="C:Holliday junction resolvase complex"/>
    <property type="evidence" value="ECO:0007669"/>
    <property type="project" value="UniProtKB-UniRule"/>
</dbReference>
<dbReference type="GO" id="GO:0008821">
    <property type="term" value="F:crossover junction DNA endonuclease activity"/>
    <property type="evidence" value="ECO:0007669"/>
    <property type="project" value="UniProtKB-UniRule"/>
</dbReference>
<dbReference type="GO" id="GO:0003677">
    <property type="term" value="F:DNA binding"/>
    <property type="evidence" value="ECO:0007669"/>
    <property type="project" value="UniProtKB-KW"/>
</dbReference>
<dbReference type="GO" id="GO:0000287">
    <property type="term" value="F:magnesium ion binding"/>
    <property type="evidence" value="ECO:0007669"/>
    <property type="project" value="UniProtKB-UniRule"/>
</dbReference>
<dbReference type="GO" id="GO:0006310">
    <property type="term" value="P:DNA recombination"/>
    <property type="evidence" value="ECO:0007669"/>
    <property type="project" value="UniProtKB-UniRule"/>
</dbReference>
<dbReference type="GO" id="GO:0006281">
    <property type="term" value="P:DNA repair"/>
    <property type="evidence" value="ECO:0007669"/>
    <property type="project" value="UniProtKB-UniRule"/>
</dbReference>
<dbReference type="GO" id="GO:0009432">
    <property type="term" value="P:SOS response"/>
    <property type="evidence" value="ECO:0000269"/>
    <property type="project" value="CollecTF"/>
</dbReference>
<dbReference type="CDD" id="cd16962">
    <property type="entry name" value="RuvC"/>
    <property type="match status" value="1"/>
</dbReference>
<dbReference type="FunFam" id="3.30.420.10:FF:000002">
    <property type="entry name" value="Crossover junction endodeoxyribonuclease RuvC"/>
    <property type="match status" value="1"/>
</dbReference>
<dbReference type="Gene3D" id="3.30.420.10">
    <property type="entry name" value="Ribonuclease H-like superfamily/Ribonuclease H"/>
    <property type="match status" value="1"/>
</dbReference>
<dbReference type="HAMAP" id="MF_00034">
    <property type="entry name" value="RuvC"/>
    <property type="match status" value="1"/>
</dbReference>
<dbReference type="InterPro" id="IPR012337">
    <property type="entry name" value="RNaseH-like_sf"/>
</dbReference>
<dbReference type="InterPro" id="IPR036397">
    <property type="entry name" value="RNaseH_sf"/>
</dbReference>
<dbReference type="InterPro" id="IPR020563">
    <property type="entry name" value="X-over_junc_endoDNase_Mg_BS"/>
</dbReference>
<dbReference type="InterPro" id="IPR002176">
    <property type="entry name" value="X-over_junc_endoDNase_RuvC"/>
</dbReference>
<dbReference type="NCBIfam" id="TIGR00228">
    <property type="entry name" value="ruvC"/>
    <property type="match status" value="1"/>
</dbReference>
<dbReference type="PANTHER" id="PTHR30194">
    <property type="entry name" value="CROSSOVER JUNCTION ENDODEOXYRIBONUCLEASE RUVC"/>
    <property type="match status" value="1"/>
</dbReference>
<dbReference type="PANTHER" id="PTHR30194:SF3">
    <property type="entry name" value="CROSSOVER JUNCTION ENDODEOXYRIBONUCLEASE RUVC"/>
    <property type="match status" value="1"/>
</dbReference>
<dbReference type="Pfam" id="PF02075">
    <property type="entry name" value="RuvC"/>
    <property type="match status" value="1"/>
</dbReference>
<dbReference type="PRINTS" id="PR00696">
    <property type="entry name" value="RSOLVASERUVC"/>
</dbReference>
<dbReference type="SUPFAM" id="SSF53098">
    <property type="entry name" value="Ribonuclease H-like"/>
    <property type="match status" value="1"/>
</dbReference>
<dbReference type="PROSITE" id="PS01321">
    <property type="entry name" value="RUVC"/>
    <property type="match status" value="1"/>
</dbReference>
<evidence type="ECO:0000255" key="1">
    <source>
        <dbReference type="HAMAP-Rule" id="MF_00034"/>
    </source>
</evidence>
<comment type="function">
    <text evidence="1">The RuvA-RuvB-RuvC complex processes Holliday junction (HJ) DNA during genetic recombination and DNA repair. Endonuclease that resolves HJ intermediates. Cleaves cruciform DNA by making single-stranded nicks across the HJ at symmetrical positions within the homologous arms, yielding a 5'-phosphate and a 3'-hydroxyl group; requires a central core of homology in the junction. The consensus cleavage sequence is 5'-(A/T)TT(C/G)-3'. Cleavage occurs on the 3'-side of the TT dinucleotide at the point of strand exchange. HJ branch migration catalyzed by RuvA-RuvB allows RuvC to scan DNA until it finds its consensus sequence, where it cleaves and resolves the cruciform DNA.</text>
</comment>
<comment type="catalytic activity">
    <reaction evidence="1">
        <text>Endonucleolytic cleavage at a junction such as a reciprocal single-stranded crossover between two homologous DNA duplexes (Holliday junction).</text>
        <dbReference type="EC" id="3.1.21.10"/>
    </reaction>
</comment>
<comment type="cofactor">
    <cofactor evidence="1">
        <name>Mg(2+)</name>
        <dbReference type="ChEBI" id="CHEBI:18420"/>
    </cofactor>
    <text evidence="1">Binds 2 Mg(2+) ion per subunit.</text>
</comment>
<comment type="subunit">
    <text evidence="1">Homodimer which binds Holliday junction (HJ) DNA. The HJ becomes 2-fold symmetrical on binding to RuvC with unstacked arms; it has a different conformation from HJ DNA in complex with RuvA. In the full resolvosome a probable DNA-RuvA(4)-RuvB(12)-RuvC(2) complex forms which resolves the HJ.</text>
</comment>
<comment type="subcellular location">
    <subcellularLocation>
        <location evidence="1">Cytoplasm</location>
    </subcellularLocation>
</comment>
<comment type="similarity">
    <text evidence="1">Belongs to the RuvC family.</text>
</comment>
<proteinExistence type="inferred from homology"/>
<accession>Q92M90</accession>
<sequence>MQNTIRIIGIDPGLRRTGWGVIETLGNSLRFVASGTVTSDGELDLASRLCQLHDGLAEVVHGYQPHEAAVEQTFVNKDATATLKLGQARGIAMLVPARAGLRVAEYAPNAVKKAVIGVGHGEKQQIHMMLKVLMPKAEFKGNDAADALAIAICHAHNRQAVTSRLAALAG</sequence>
<keyword id="KW-0963">Cytoplasm</keyword>
<keyword id="KW-0227">DNA damage</keyword>
<keyword id="KW-0233">DNA recombination</keyword>
<keyword id="KW-0234">DNA repair</keyword>
<keyword id="KW-0238">DNA-binding</keyword>
<keyword id="KW-0255">Endonuclease</keyword>
<keyword id="KW-0378">Hydrolase</keyword>
<keyword id="KW-0460">Magnesium</keyword>
<keyword id="KW-0479">Metal-binding</keyword>
<keyword id="KW-0540">Nuclease</keyword>
<keyword id="KW-1185">Reference proteome</keyword>
<gene>
    <name evidence="1" type="primary">ruvC</name>
    <name type="ordered locus">R02751</name>
    <name type="ORF">SMc03967</name>
</gene>
<organism>
    <name type="scientific">Rhizobium meliloti (strain 1021)</name>
    <name type="common">Ensifer meliloti</name>
    <name type="synonym">Sinorhizobium meliloti</name>
    <dbReference type="NCBI Taxonomy" id="266834"/>
    <lineage>
        <taxon>Bacteria</taxon>
        <taxon>Pseudomonadati</taxon>
        <taxon>Pseudomonadota</taxon>
        <taxon>Alphaproteobacteria</taxon>
        <taxon>Hyphomicrobiales</taxon>
        <taxon>Rhizobiaceae</taxon>
        <taxon>Sinorhizobium/Ensifer group</taxon>
        <taxon>Sinorhizobium</taxon>
    </lineage>
</organism>
<protein>
    <recommendedName>
        <fullName evidence="1">Crossover junction endodeoxyribonuclease RuvC</fullName>
        <ecNumber evidence="1">3.1.21.10</ecNumber>
    </recommendedName>
    <alternativeName>
        <fullName evidence="1">Holliday junction nuclease RuvC</fullName>
    </alternativeName>
    <alternativeName>
        <fullName evidence="1">Holliday junction resolvase RuvC</fullName>
    </alternativeName>
</protein>